<reference key="1">
    <citation type="journal article" date="2005" name="Nature">
        <title>The genome of the social amoeba Dictyostelium discoideum.</title>
        <authorList>
            <person name="Eichinger L."/>
            <person name="Pachebat J.A."/>
            <person name="Gloeckner G."/>
            <person name="Rajandream M.A."/>
            <person name="Sucgang R."/>
            <person name="Berriman M."/>
            <person name="Song J."/>
            <person name="Olsen R."/>
            <person name="Szafranski K."/>
            <person name="Xu Q."/>
            <person name="Tunggal B."/>
            <person name="Kummerfeld S."/>
            <person name="Madera M."/>
            <person name="Konfortov B.A."/>
            <person name="Rivero F."/>
            <person name="Bankier A.T."/>
            <person name="Lehmann R."/>
            <person name="Hamlin N."/>
            <person name="Davies R."/>
            <person name="Gaudet P."/>
            <person name="Fey P."/>
            <person name="Pilcher K."/>
            <person name="Chen G."/>
            <person name="Saunders D."/>
            <person name="Sodergren E.J."/>
            <person name="Davis P."/>
            <person name="Kerhornou A."/>
            <person name="Nie X."/>
            <person name="Hall N."/>
            <person name="Anjard C."/>
            <person name="Hemphill L."/>
            <person name="Bason N."/>
            <person name="Farbrother P."/>
            <person name="Desany B."/>
            <person name="Just E."/>
            <person name="Morio T."/>
            <person name="Rost R."/>
            <person name="Churcher C.M."/>
            <person name="Cooper J."/>
            <person name="Haydock S."/>
            <person name="van Driessche N."/>
            <person name="Cronin A."/>
            <person name="Goodhead I."/>
            <person name="Muzny D.M."/>
            <person name="Mourier T."/>
            <person name="Pain A."/>
            <person name="Lu M."/>
            <person name="Harper D."/>
            <person name="Lindsay R."/>
            <person name="Hauser H."/>
            <person name="James K.D."/>
            <person name="Quiles M."/>
            <person name="Madan Babu M."/>
            <person name="Saito T."/>
            <person name="Buchrieser C."/>
            <person name="Wardroper A."/>
            <person name="Felder M."/>
            <person name="Thangavelu M."/>
            <person name="Johnson D."/>
            <person name="Knights A."/>
            <person name="Loulseged H."/>
            <person name="Mungall K.L."/>
            <person name="Oliver K."/>
            <person name="Price C."/>
            <person name="Quail M.A."/>
            <person name="Urushihara H."/>
            <person name="Hernandez J."/>
            <person name="Rabbinowitsch E."/>
            <person name="Steffen D."/>
            <person name="Sanders M."/>
            <person name="Ma J."/>
            <person name="Kohara Y."/>
            <person name="Sharp S."/>
            <person name="Simmonds M.N."/>
            <person name="Spiegler S."/>
            <person name="Tivey A."/>
            <person name="Sugano S."/>
            <person name="White B."/>
            <person name="Walker D."/>
            <person name="Woodward J.R."/>
            <person name="Winckler T."/>
            <person name="Tanaka Y."/>
            <person name="Shaulsky G."/>
            <person name="Schleicher M."/>
            <person name="Weinstock G.M."/>
            <person name="Rosenthal A."/>
            <person name="Cox E.C."/>
            <person name="Chisholm R.L."/>
            <person name="Gibbs R.A."/>
            <person name="Loomis W.F."/>
            <person name="Platzer M."/>
            <person name="Kay R.R."/>
            <person name="Williams J.G."/>
            <person name="Dear P.H."/>
            <person name="Noegel A.A."/>
            <person name="Barrell B.G."/>
            <person name="Kuspa A."/>
        </authorList>
    </citation>
    <scope>NUCLEOTIDE SEQUENCE [LARGE SCALE GENOMIC DNA]</scope>
    <source>
        <strain>AX4</strain>
    </source>
</reference>
<gene>
    <name type="ORF">DDB_G0289415</name>
</gene>
<name>PESC_DICDI</name>
<organism>
    <name type="scientific">Dictyostelium discoideum</name>
    <name type="common">Social amoeba</name>
    <dbReference type="NCBI Taxonomy" id="44689"/>
    <lineage>
        <taxon>Eukaryota</taxon>
        <taxon>Amoebozoa</taxon>
        <taxon>Evosea</taxon>
        <taxon>Eumycetozoa</taxon>
        <taxon>Dictyostelia</taxon>
        <taxon>Dictyosteliales</taxon>
        <taxon>Dictyosteliaceae</taxon>
        <taxon>Dictyostelium</taxon>
    </lineage>
</organism>
<proteinExistence type="inferred from homology"/>
<evidence type="ECO:0000255" key="1">
    <source>
        <dbReference type="HAMAP-Rule" id="MF_03028"/>
    </source>
</evidence>
<evidence type="ECO:0000256" key="2">
    <source>
        <dbReference type="SAM" id="MobiDB-lite"/>
    </source>
</evidence>
<keyword id="KW-0175">Coiled coil</keyword>
<keyword id="KW-0539">Nucleus</keyword>
<keyword id="KW-1185">Reference proteome</keyword>
<keyword id="KW-0690">Ribosome biogenesis</keyword>
<keyword id="KW-0698">rRNA processing</keyword>
<sequence>MGGIKKFKKGEKGENLKFITRNEAVKKLQISLKIFRKLCILKGIHPRDPKKKFKGKHKTYYYSKDIKYLQNEKVLEIIRARKVFKDREKKLINKKQFGALKNLKENRPMITLDHIIKERYPTFQDALKDLDDCLSLIHLFANMDASAKVRENQILACERLAREFQYYIIQSKSLRKVFVSVKGVYYQADVMGETITWITPLNYLSKKEKEVDYGVMISFLEFYQALMKFVNYRLFTSIGLTYPPTIDDAKLRKCDSLINIFESKPQQQTKTNNTTKKSKSTTAAAAATTPVDPKLKKLEEKISKINSKEEKEIKEQIVEEDTNMLQVNSSGISKDFEDLVGNESDNIPKIMDVTTLFKGFHFYISREVPRHMLEFVILSFGGRVSFPGSGDKVKEVNQSITHQIVDRSNSVKVHNTREYIQPQWVFDSVNSKLLLPYSEYTIGVIPPAHLSPFVEYEEDSYIPARKQALDALINSKEFADAKINTNAEQDDDNDNDNDNRKQVDSDGESDDEDDEDLEHLETRYTEELRKEQSKKRKSSEVDDDDEEEEDGEEDGEEEEEEEDGEEESESESESEQVAKPVLTKKQRDELNKQKQAEEDTKLAELMIRKKDKWIYNKVKETNQQRATANQTLLEKRNKVESGKDVNGNVKVAPQPKKPAPLVKKSQQKQQQASKKQKK</sequence>
<protein>
    <recommendedName>
        <fullName evidence="1">Pescadillo homolog</fullName>
    </recommendedName>
</protein>
<feature type="chain" id="PRO_0000370467" description="Pescadillo homolog">
    <location>
        <begin position="1"/>
        <end position="678"/>
    </location>
</feature>
<feature type="domain" description="BRCT" evidence="1">
    <location>
        <begin position="352"/>
        <end position="442"/>
    </location>
</feature>
<feature type="region of interest" description="Disordered" evidence="2">
    <location>
        <begin position="265"/>
        <end position="289"/>
    </location>
</feature>
<feature type="region of interest" description="Disordered" evidence="2">
    <location>
        <begin position="485"/>
        <end position="601"/>
    </location>
</feature>
<feature type="region of interest" description="Disordered" evidence="2">
    <location>
        <begin position="626"/>
        <end position="678"/>
    </location>
</feature>
<feature type="coiled-coil region" evidence="1">
    <location>
        <begin position="581"/>
        <end position="640"/>
    </location>
</feature>
<feature type="compositionally biased region" description="Low complexity" evidence="2">
    <location>
        <begin position="269"/>
        <end position="289"/>
    </location>
</feature>
<feature type="compositionally biased region" description="Acidic residues" evidence="2">
    <location>
        <begin position="505"/>
        <end position="518"/>
    </location>
</feature>
<feature type="compositionally biased region" description="Basic and acidic residues" evidence="2">
    <location>
        <begin position="519"/>
        <end position="531"/>
    </location>
</feature>
<feature type="compositionally biased region" description="Acidic residues" evidence="2">
    <location>
        <begin position="541"/>
        <end position="574"/>
    </location>
</feature>
<feature type="compositionally biased region" description="Basic and acidic residues" evidence="2">
    <location>
        <begin position="585"/>
        <end position="601"/>
    </location>
</feature>
<feature type="compositionally biased region" description="Basic and acidic residues" evidence="2">
    <location>
        <begin position="633"/>
        <end position="643"/>
    </location>
</feature>
<feature type="compositionally biased region" description="Low complexity" evidence="2">
    <location>
        <begin position="649"/>
        <end position="678"/>
    </location>
</feature>
<comment type="function">
    <text evidence="1">Required for maturation of ribosomal RNAs and formation of the large ribosomal subunit.</text>
</comment>
<comment type="subcellular location">
    <subcellularLocation>
        <location evidence="1">Nucleus</location>
        <location evidence="1">Nucleolus</location>
    </subcellularLocation>
    <subcellularLocation>
        <location evidence="1">Nucleus</location>
        <location evidence="1">Nucleoplasm</location>
    </subcellularLocation>
</comment>
<comment type="similarity">
    <text evidence="1">Belongs to the pescadillo family.</text>
</comment>
<dbReference type="EMBL" id="AAFI02000140">
    <property type="protein sequence ID" value="EAL62735.1"/>
    <property type="molecule type" value="Genomic_DNA"/>
</dbReference>
<dbReference type="RefSeq" id="XP_636241.1">
    <property type="nucleotide sequence ID" value="XM_631149.1"/>
</dbReference>
<dbReference type="SMR" id="Q54HJ2"/>
<dbReference type="FunCoup" id="Q54HJ2">
    <property type="interactions" value="1009"/>
</dbReference>
<dbReference type="STRING" id="44689.Q54HJ2"/>
<dbReference type="PaxDb" id="44689-DDB0188412"/>
<dbReference type="EnsemblProtists" id="EAL62735">
    <property type="protein sequence ID" value="EAL62735"/>
    <property type="gene ID" value="DDB_G0289415"/>
</dbReference>
<dbReference type="GeneID" id="8627131"/>
<dbReference type="KEGG" id="ddi:DDB_G0289415"/>
<dbReference type="dictyBase" id="DDB_G0289415"/>
<dbReference type="VEuPathDB" id="AmoebaDB:DDB_G0289415"/>
<dbReference type="eggNOG" id="KOG2481">
    <property type="taxonomic scope" value="Eukaryota"/>
</dbReference>
<dbReference type="HOGENOM" id="CLU_019619_0_0_1"/>
<dbReference type="InParanoid" id="Q54HJ2"/>
<dbReference type="OMA" id="QKVTWIV"/>
<dbReference type="PhylomeDB" id="Q54HJ2"/>
<dbReference type="Reactome" id="R-DDI-6791226">
    <property type="pathway name" value="Major pathway of rRNA processing in the nucleolus and cytosol"/>
</dbReference>
<dbReference type="PRO" id="PR:Q54HJ2"/>
<dbReference type="Proteomes" id="UP000002195">
    <property type="component" value="Chromosome 5"/>
</dbReference>
<dbReference type="GO" id="GO:0005654">
    <property type="term" value="C:nucleoplasm"/>
    <property type="evidence" value="ECO:0007669"/>
    <property type="project" value="UniProtKB-SubCell"/>
</dbReference>
<dbReference type="GO" id="GO:0070545">
    <property type="term" value="C:PeBoW complex"/>
    <property type="evidence" value="ECO:0000318"/>
    <property type="project" value="GO_Central"/>
</dbReference>
<dbReference type="GO" id="GO:0030687">
    <property type="term" value="C:preribosome, large subunit precursor"/>
    <property type="evidence" value="ECO:0007669"/>
    <property type="project" value="UniProtKB-UniRule"/>
</dbReference>
<dbReference type="GO" id="GO:0043021">
    <property type="term" value="F:ribonucleoprotein complex binding"/>
    <property type="evidence" value="ECO:0007669"/>
    <property type="project" value="UniProtKB-UniRule"/>
</dbReference>
<dbReference type="GO" id="GO:0003723">
    <property type="term" value="F:RNA binding"/>
    <property type="evidence" value="ECO:0000318"/>
    <property type="project" value="GO_Central"/>
</dbReference>
<dbReference type="GO" id="GO:0000466">
    <property type="term" value="P:maturation of 5.8S rRNA from tricistronic rRNA transcript (SSU-rRNA, 5.8S rRNA, LSU-rRNA)"/>
    <property type="evidence" value="ECO:0007669"/>
    <property type="project" value="UniProtKB-UniRule"/>
</dbReference>
<dbReference type="GO" id="GO:0000463">
    <property type="term" value="P:maturation of LSU-rRNA from tricistronic rRNA transcript (SSU-rRNA, 5.8S rRNA, LSU-rRNA)"/>
    <property type="evidence" value="ECO:0000318"/>
    <property type="project" value="GO_Central"/>
</dbReference>
<dbReference type="CDD" id="cd17709">
    <property type="entry name" value="BRCT_pescadillo_like"/>
    <property type="match status" value="1"/>
</dbReference>
<dbReference type="FunFam" id="3.40.50.10190:FF:000002">
    <property type="entry name" value="Pescadillo homolog"/>
    <property type="match status" value="1"/>
</dbReference>
<dbReference type="Gene3D" id="3.40.50.10190">
    <property type="entry name" value="BRCT domain"/>
    <property type="match status" value="1"/>
</dbReference>
<dbReference type="HAMAP" id="MF_03028">
    <property type="entry name" value="Pescadillo"/>
    <property type="match status" value="1"/>
</dbReference>
<dbReference type="InterPro" id="IPR001357">
    <property type="entry name" value="BRCT_dom"/>
</dbReference>
<dbReference type="InterPro" id="IPR036420">
    <property type="entry name" value="BRCT_dom_sf"/>
</dbReference>
<dbReference type="InterPro" id="IPR010613">
    <property type="entry name" value="PES"/>
</dbReference>
<dbReference type="PANTHER" id="PTHR12221">
    <property type="entry name" value="PESCADILLO - RELATED"/>
    <property type="match status" value="1"/>
</dbReference>
<dbReference type="PANTHER" id="PTHR12221:SF6">
    <property type="entry name" value="PESCADILLO HOMOLOG"/>
    <property type="match status" value="1"/>
</dbReference>
<dbReference type="Pfam" id="PF16589">
    <property type="entry name" value="BRCT_2"/>
    <property type="match status" value="1"/>
</dbReference>
<dbReference type="Pfam" id="PF06732">
    <property type="entry name" value="Pescadillo_N"/>
    <property type="match status" value="1"/>
</dbReference>
<dbReference type="SMART" id="SM00292">
    <property type="entry name" value="BRCT"/>
    <property type="match status" value="1"/>
</dbReference>
<dbReference type="SUPFAM" id="SSF52113">
    <property type="entry name" value="BRCT domain"/>
    <property type="match status" value="1"/>
</dbReference>
<dbReference type="PROSITE" id="PS50172">
    <property type="entry name" value="BRCT"/>
    <property type="match status" value="1"/>
</dbReference>
<accession>Q54HJ2</accession>